<accession>Q2NIV7</accession>
<evidence type="ECO:0000255" key="1">
    <source>
        <dbReference type="HAMAP-Rule" id="MF_01320"/>
    </source>
</evidence>
<evidence type="ECO:0000256" key="2">
    <source>
        <dbReference type="SAM" id="MobiDB-lite"/>
    </source>
</evidence>
<evidence type="ECO:0000305" key="3"/>
<gene>
    <name evidence="1" type="primary">rplB</name>
    <name type="ordered locus">AYWB_519</name>
</gene>
<reference key="1">
    <citation type="journal article" date="2006" name="J. Bacteriol.">
        <title>Living with genome instability: the adaptation of phytoplasmas to diverse environments of their insect and plant hosts.</title>
        <authorList>
            <person name="Bai X."/>
            <person name="Zhang J."/>
            <person name="Ewing A."/>
            <person name="Miller S.A."/>
            <person name="Jancso Radek A."/>
            <person name="Shevchenko D.V."/>
            <person name="Tsukerman K."/>
            <person name="Walunas T."/>
            <person name="Lapidus A."/>
            <person name="Campbell J.W."/>
            <person name="Hogenhout S.A."/>
        </authorList>
    </citation>
    <scope>NUCLEOTIDE SEQUENCE [LARGE SCALE GENOMIC DNA]</scope>
    <source>
        <strain>AYWB</strain>
    </source>
</reference>
<name>RL2_AYWBP</name>
<sequence>MAIKKYKPTTNGCRNMSVSAFSEITTQTPERSLLVSHKDQAGRNNQGKITVRHRGGGVKRKYRLIDFKRNKDNIVGKVATIEYDPNRSANIALIHYVDGEKRYILAPKGLTVGMQIVSGKETDIKVANCLPLMNIPVGTTVHNIELKPGKGGQIARSAGSSCQIISREDKYVLLRLQSGEVRKVLATCRATIGEIGNESYKLINYGKAGKKRFLGIRPTVRGSAMNPNDHPHGGGEGRAPIGRKSPMTPWGKKARGVKTRDRKKASNALIIRRRKK</sequence>
<keyword id="KW-0687">Ribonucleoprotein</keyword>
<keyword id="KW-0689">Ribosomal protein</keyword>
<keyword id="KW-0694">RNA-binding</keyword>
<keyword id="KW-0699">rRNA-binding</keyword>
<protein>
    <recommendedName>
        <fullName evidence="1">Large ribosomal subunit protein uL2</fullName>
    </recommendedName>
    <alternativeName>
        <fullName evidence="3">50S ribosomal protein L2</fullName>
    </alternativeName>
</protein>
<feature type="chain" id="PRO_0000237147" description="Large ribosomal subunit protein uL2">
    <location>
        <begin position="1"/>
        <end position="276"/>
    </location>
</feature>
<feature type="region of interest" description="Disordered" evidence="2">
    <location>
        <begin position="221"/>
        <end position="276"/>
    </location>
</feature>
<feature type="compositionally biased region" description="Basic residues" evidence="2">
    <location>
        <begin position="252"/>
        <end position="276"/>
    </location>
</feature>
<proteinExistence type="inferred from homology"/>
<comment type="function">
    <text evidence="1">One of the primary rRNA binding proteins. Required for association of the 30S and 50S subunits to form the 70S ribosome, for tRNA binding and peptide bond formation. It has been suggested to have peptidyltransferase activity; this is somewhat controversial. Makes several contacts with the 16S rRNA in the 70S ribosome.</text>
</comment>
<comment type="subunit">
    <text evidence="1">Part of the 50S ribosomal subunit. Forms a bridge to the 30S subunit in the 70S ribosome.</text>
</comment>
<comment type="similarity">
    <text evidence="1">Belongs to the universal ribosomal protein uL2 family.</text>
</comment>
<dbReference type="EMBL" id="CP000061">
    <property type="protein sequence ID" value="ABC65636.1"/>
    <property type="molecule type" value="Genomic_DNA"/>
</dbReference>
<dbReference type="RefSeq" id="WP_011412798.1">
    <property type="nucleotide sequence ID" value="NC_007716.1"/>
</dbReference>
<dbReference type="SMR" id="Q2NIV7"/>
<dbReference type="STRING" id="322098.AYWB_519"/>
<dbReference type="KEGG" id="ayw:AYWB_519"/>
<dbReference type="eggNOG" id="COG0090">
    <property type="taxonomic scope" value="Bacteria"/>
</dbReference>
<dbReference type="HOGENOM" id="CLU_036235_2_1_14"/>
<dbReference type="OrthoDB" id="9778722at2"/>
<dbReference type="PhylomeDB" id="Q2NIV7"/>
<dbReference type="Proteomes" id="UP000001934">
    <property type="component" value="Chromosome"/>
</dbReference>
<dbReference type="GO" id="GO:0015934">
    <property type="term" value="C:large ribosomal subunit"/>
    <property type="evidence" value="ECO:0007669"/>
    <property type="project" value="InterPro"/>
</dbReference>
<dbReference type="GO" id="GO:0019843">
    <property type="term" value="F:rRNA binding"/>
    <property type="evidence" value="ECO:0007669"/>
    <property type="project" value="UniProtKB-UniRule"/>
</dbReference>
<dbReference type="GO" id="GO:0003735">
    <property type="term" value="F:structural constituent of ribosome"/>
    <property type="evidence" value="ECO:0007669"/>
    <property type="project" value="InterPro"/>
</dbReference>
<dbReference type="GO" id="GO:0016740">
    <property type="term" value="F:transferase activity"/>
    <property type="evidence" value="ECO:0007669"/>
    <property type="project" value="InterPro"/>
</dbReference>
<dbReference type="GO" id="GO:0002181">
    <property type="term" value="P:cytoplasmic translation"/>
    <property type="evidence" value="ECO:0007669"/>
    <property type="project" value="TreeGrafter"/>
</dbReference>
<dbReference type="FunFam" id="2.30.30.30:FF:000001">
    <property type="entry name" value="50S ribosomal protein L2"/>
    <property type="match status" value="1"/>
</dbReference>
<dbReference type="FunFam" id="2.40.50.140:FF:000003">
    <property type="entry name" value="50S ribosomal protein L2"/>
    <property type="match status" value="1"/>
</dbReference>
<dbReference type="FunFam" id="4.10.950.10:FF:000001">
    <property type="entry name" value="50S ribosomal protein L2"/>
    <property type="match status" value="1"/>
</dbReference>
<dbReference type="Gene3D" id="2.30.30.30">
    <property type="match status" value="1"/>
</dbReference>
<dbReference type="Gene3D" id="2.40.50.140">
    <property type="entry name" value="Nucleic acid-binding proteins"/>
    <property type="match status" value="1"/>
</dbReference>
<dbReference type="Gene3D" id="4.10.950.10">
    <property type="entry name" value="Ribosomal protein L2, domain 3"/>
    <property type="match status" value="1"/>
</dbReference>
<dbReference type="HAMAP" id="MF_01320_B">
    <property type="entry name" value="Ribosomal_uL2_B"/>
    <property type="match status" value="1"/>
</dbReference>
<dbReference type="InterPro" id="IPR012340">
    <property type="entry name" value="NA-bd_OB-fold"/>
</dbReference>
<dbReference type="InterPro" id="IPR014722">
    <property type="entry name" value="Rib_uL2_dom2"/>
</dbReference>
<dbReference type="InterPro" id="IPR002171">
    <property type="entry name" value="Ribosomal_uL2"/>
</dbReference>
<dbReference type="InterPro" id="IPR005880">
    <property type="entry name" value="Ribosomal_uL2_bac/org-type"/>
</dbReference>
<dbReference type="InterPro" id="IPR022669">
    <property type="entry name" value="Ribosomal_uL2_C"/>
</dbReference>
<dbReference type="InterPro" id="IPR022671">
    <property type="entry name" value="Ribosomal_uL2_CS"/>
</dbReference>
<dbReference type="InterPro" id="IPR014726">
    <property type="entry name" value="Ribosomal_uL2_dom3"/>
</dbReference>
<dbReference type="InterPro" id="IPR022666">
    <property type="entry name" value="Ribosomal_uL2_RNA-bd_dom"/>
</dbReference>
<dbReference type="InterPro" id="IPR008991">
    <property type="entry name" value="Translation_prot_SH3-like_sf"/>
</dbReference>
<dbReference type="NCBIfam" id="TIGR01171">
    <property type="entry name" value="rplB_bact"/>
    <property type="match status" value="1"/>
</dbReference>
<dbReference type="PANTHER" id="PTHR13691:SF5">
    <property type="entry name" value="LARGE RIBOSOMAL SUBUNIT PROTEIN UL2M"/>
    <property type="match status" value="1"/>
</dbReference>
<dbReference type="PANTHER" id="PTHR13691">
    <property type="entry name" value="RIBOSOMAL PROTEIN L2"/>
    <property type="match status" value="1"/>
</dbReference>
<dbReference type="Pfam" id="PF00181">
    <property type="entry name" value="Ribosomal_L2"/>
    <property type="match status" value="1"/>
</dbReference>
<dbReference type="Pfam" id="PF03947">
    <property type="entry name" value="Ribosomal_L2_C"/>
    <property type="match status" value="1"/>
</dbReference>
<dbReference type="PIRSF" id="PIRSF002158">
    <property type="entry name" value="Ribosomal_L2"/>
    <property type="match status" value="1"/>
</dbReference>
<dbReference type="SMART" id="SM01383">
    <property type="entry name" value="Ribosomal_L2"/>
    <property type="match status" value="1"/>
</dbReference>
<dbReference type="SMART" id="SM01382">
    <property type="entry name" value="Ribosomal_L2_C"/>
    <property type="match status" value="1"/>
</dbReference>
<dbReference type="SUPFAM" id="SSF50249">
    <property type="entry name" value="Nucleic acid-binding proteins"/>
    <property type="match status" value="1"/>
</dbReference>
<dbReference type="SUPFAM" id="SSF50104">
    <property type="entry name" value="Translation proteins SH3-like domain"/>
    <property type="match status" value="1"/>
</dbReference>
<dbReference type="PROSITE" id="PS00467">
    <property type="entry name" value="RIBOSOMAL_L2"/>
    <property type="match status" value="1"/>
</dbReference>
<organism>
    <name type="scientific">Aster yellows witches'-broom phytoplasma (strain AYWB)</name>
    <dbReference type="NCBI Taxonomy" id="322098"/>
    <lineage>
        <taxon>Bacteria</taxon>
        <taxon>Bacillati</taxon>
        <taxon>Mycoplasmatota</taxon>
        <taxon>Mollicutes</taxon>
        <taxon>Acholeplasmatales</taxon>
        <taxon>Acholeplasmataceae</taxon>
        <taxon>Candidatus Phytoplasma</taxon>
        <taxon>16SrI (Aster yellows group)</taxon>
    </lineage>
</organism>